<proteinExistence type="inferred from homology"/>
<reference key="1">
    <citation type="journal article" date="2003" name="Genome Res.">
        <title>Tropheryma whipplei twist: a human pathogenic Actinobacteria with a reduced genome.</title>
        <authorList>
            <person name="Raoult D."/>
            <person name="Ogata H."/>
            <person name="Audic S."/>
            <person name="Robert C."/>
            <person name="Suhre K."/>
            <person name="Drancourt M."/>
            <person name="Claverie J.-M."/>
        </authorList>
    </citation>
    <scope>NUCLEOTIDE SEQUENCE [LARGE SCALE GENOMIC DNA]</scope>
    <source>
        <strain>Twist</strain>
    </source>
</reference>
<name>FOLD_TROWT</name>
<accession>Q83FS2</accession>
<evidence type="ECO:0000255" key="1">
    <source>
        <dbReference type="HAMAP-Rule" id="MF_01576"/>
    </source>
</evidence>
<feature type="chain" id="PRO_0000268555" description="Bifunctional protein FolD">
    <location>
        <begin position="1"/>
        <end position="295"/>
    </location>
</feature>
<feature type="binding site" evidence="1">
    <location>
        <begin position="165"/>
        <end position="167"/>
    </location>
    <ligand>
        <name>NADP(+)</name>
        <dbReference type="ChEBI" id="CHEBI:58349"/>
    </ligand>
</feature>
<feature type="binding site" evidence="1">
    <location>
        <position position="192"/>
    </location>
    <ligand>
        <name>NADP(+)</name>
        <dbReference type="ChEBI" id="CHEBI:58349"/>
    </ligand>
</feature>
<feature type="binding site" evidence="1">
    <location>
        <position position="233"/>
    </location>
    <ligand>
        <name>NADP(+)</name>
        <dbReference type="ChEBI" id="CHEBI:58349"/>
    </ligand>
</feature>
<comment type="function">
    <text evidence="1">Catalyzes the oxidation of 5,10-methylenetetrahydrofolate to 5,10-methenyltetrahydrofolate and then the hydrolysis of 5,10-methenyltetrahydrofolate to 10-formyltetrahydrofolate.</text>
</comment>
<comment type="catalytic activity">
    <reaction evidence="1">
        <text>(6R)-5,10-methylene-5,6,7,8-tetrahydrofolate + NADP(+) = (6R)-5,10-methenyltetrahydrofolate + NADPH</text>
        <dbReference type="Rhea" id="RHEA:22812"/>
        <dbReference type="ChEBI" id="CHEBI:15636"/>
        <dbReference type="ChEBI" id="CHEBI:57455"/>
        <dbReference type="ChEBI" id="CHEBI:57783"/>
        <dbReference type="ChEBI" id="CHEBI:58349"/>
        <dbReference type="EC" id="1.5.1.5"/>
    </reaction>
</comment>
<comment type="catalytic activity">
    <reaction evidence="1">
        <text>(6R)-5,10-methenyltetrahydrofolate + H2O = (6R)-10-formyltetrahydrofolate + H(+)</text>
        <dbReference type="Rhea" id="RHEA:23700"/>
        <dbReference type="ChEBI" id="CHEBI:15377"/>
        <dbReference type="ChEBI" id="CHEBI:15378"/>
        <dbReference type="ChEBI" id="CHEBI:57455"/>
        <dbReference type="ChEBI" id="CHEBI:195366"/>
        <dbReference type="EC" id="3.5.4.9"/>
    </reaction>
</comment>
<comment type="pathway">
    <text evidence="1">One-carbon metabolism; tetrahydrofolate interconversion.</text>
</comment>
<comment type="subunit">
    <text evidence="1">Homodimer.</text>
</comment>
<comment type="similarity">
    <text evidence="1">Belongs to the tetrahydrofolate dehydrogenase/cyclohydrolase family.</text>
</comment>
<keyword id="KW-0028">Amino-acid biosynthesis</keyword>
<keyword id="KW-0368">Histidine biosynthesis</keyword>
<keyword id="KW-0378">Hydrolase</keyword>
<keyword id="KW-0486">Methionine biosynthesis</keyword>
<keyword id="KW-0511">Multifunctional enzyme</keyword>
<keyword id="KW-0521">NADP</keyword>
<keyword id="KW-0554">One-carbon metabolism</keyword>
<keyword id="KW-0560">Oxidoreductase</keyword>
<keyword id="KW-0658">Purine biosynthesis</keyword>
<keyword id="KW-1185">Reference proteome</keyword>
<sequence length="295" mass="31123">MVAKVLDGLAVSAGIFERLHRACCELENNGVCPKLATVLVGNNPASRSYVLSKHRDCKNIGIQSTLIELPANTSEKELISKVEILNASSDVSGIIVQLPLPESIDQNKVIEAINPDKDADGLHPLNLGYLVTGKQGIVPCTPAGIVKLLEAHRITLEGKTIAVIGRGTTVGRPLGILLSGKGVNATVINIHSRSRNISGLSRIADVVVACAGVKHIVEPSWIKPGAVVVDVGINQSGVSSSGKMILTGDVHPLTKNIASYISPVVGGVGPMTRAMLMSNVINLSERDFRKRLYAS</sequence>
<gene>
    <name evidence="1" type="primary">folD</name>
    <name type="ordered locus">TWT_634</name>
</gene>
<protein>
    <recommendedName>
        <fullName evidence="1">Bifunctional protein FolD</fullName>
    </recommendedName>
    <domain>
        <recommendedName>
            <fullName evidence="1">Methylenetetrahydrofolate dehydrogenase</fullName>
            <ecNumber evidence="1">1.5.1.5</ecNumber>
        </recommendedName>
    </domain>
    <domain>
        <recommendedName>
            <fullName evidence="1">Methenyltetrahydrofolate cyclohydrolase</fullName>
            <ecNumber evidence="1">3.5.4.9</ecNumber>
        </recommendedName>
    </domain>
</protein>
<dbReference type="EC" id="1.5.1.5" evidence="1"/>
<dbReference type="EC" id="3.5.4.9" evidence="1"/>
<dbReference type="EMBL" id="AE014184">
    <property type="protein sequence ID" value="AAO44731.1"/>
    <property type="molecule type" value="Genomic_DNA"/>
</dbReference>
<dbReference type="RefSeq" id="WP_011102699.1">
    <property type="nucleotide sequence ID" value="NC_004572.3"/>
</dbReference>
<dbReference type="SMR" id="Q83FS2"/>
<dbReference type="STRING" id="203267.TWT_634"/>
<dbReference type="KEGG" id="twh:TWT_634"/>
<dbReference type="eggNOG" id="COG0190">
    <property type="taxonomic scope" value="Bacteria"/>
</dbReference>
<dbReference type="HOGENOM" id="CLU_034045_3_0_11"/>
<dbReference type="OrthoDB" id="9803580at2"/>
<dbReference type="UniPathway" id="UPA00193"/>
<dbReference type="Proteomes" id="UP000002200">
    <property type="component" value="Chromosome"/>
</dbReference>
<dbReference type="GO" id="GO:0005829">
    <property type="term" value="C:cytosol"/>
    <property type="evidence" value="ECO:0007669"/>
    <property type="project" value="TreeGrafter"/>
</dbReference>
<dbReference type="GO" id="GO:0004477">
    <property type="term" value="F:methenyltetrahydrofolate cyclohydrolase activity"/>
    <property type="evidence" value="ECO:0007669"/>
    <property type="project" value="UniProtKB-UniRule"/>
</dbReference>
<dbReference type="GO" id="GO:0004488">
    <property type="term" value="F:methylenetetrahydrofolate dehydrogenase (NADP+) activity"/>
    <property type="evidence" value="ECO:0007669"/>
    <property type="project" value="UniProtKB-UniRule"/>
</dbReference>
<dbReference type="GO" id="GO:0000105">
    <property type="term" value="P:L-histidine biosynthetic process"/>
    <property type="evidence" value="ECO:0007669"/>
    <property type="project" value="UniProtKB-KW"/>
</dbReference>
<dbReference type="GO" id="GO:0009086">
    <property type="term" value="P:methionine biosynthetic process"/>
    <property type="evidence" value="ECO:0007669"/>
    <property type="project" value="UniProtKB-KW"/>
</dbReference>
<dbReference type="GO" id="GO:0006164">
    <property type="term" value="P:purine nucleotide biosynthetic process"/>
    <property type="evidence" value="ECO:0007669"/>
    <property type="project" value="UniProtKB-KW"/>
</dbReference>
<dbReference type="GO" id="GO:0035999">
    <property type="term" value="P:tetrahydrofolate interconversion"/>
    <property type="evidence" value="ECO:0007669"/>
    <property type="project" value="UniProtKB-UniRule"/>
</dbReference>
<dbReference type="CDD" id="cd01080">
    <property type="entry name" value="NAD_bind_m-THF_DH_Cyclohyd"/>
    <property type="match status" value="1"/>
</dbReference>
<dbReference type="FunFam" id="3.40.50.10860:FF:000005">
    <property type="entry name" value="C-1-tetrahydrofolate synthase, cytoplasmic, putative"/>
    <property type="match status" value="1"/>
</dbReference>
<dbReference type="Gene3D" id="3.40.50.10860">
    <property type="entry name" value="Leucine Dehydrogenase, chain A, domain 1"/>
    <property type="match status" value="1"/>
</dbReference>
<dbReference type="Gene3D" id="3.40.50.720">
    <property type="entry name" value="NAD(P)-binding Rossmann-like Domain"/>
    <property type="match status" value="1"/>
</dbReference>
<dbReference type="HAMAP" id="MF_01576">
    <property type="entry name" value="THF_DHG_CYH"/>
    <property type="match status" value="1"/>
</dbReference>
<dbReference type="InterPro" id="IPR046346">
    <property type="entry name" value="Aminoacid_DH-like_N_sf"/>
</dbReference>
<dbReference type="InterPro" id="IPR036291">
    <property type="entry name" value="NAD(P)-bd_dom_sf"/>
</dbReference>
<dbReference type="InterPro" id="IPR000672">
    <property type="entry name" value="THF_DH/CycHdrlase"/>
</dbReference>
<dbReference type="InterPro" id="IPR020630">
    <property type="entry name" value="THF_DH/CycHdrlase_cat_dom"/>
</dbReference>
<dbReference type="InterPro" id="IPR020867">
    <property type="entry name" value="THF_DH/CycHdrlase_CS"/>
</dbReference>
<dbReference type="InterPro" id="IPR020631">
    <property type="entry name" value="THF_DH/CycHdrlase_NAD-bd_dom"/>
</dbReference>
<dbReference type="PANTHER" id="PTHR48099:SF5">
    <property type="entry name" value="C-1-TETRAHYDROFOLATE SYNTHASE, CYTOPLASMIC"/>
    <property type="match status" value="1"/>
</dbReference>
<dbReference type="PANTHER" id="PTHR48099">
    <property type="entry name" value="C-1-TETRAHYDROFOLATE SYNTHASE, CYTOPLASMIC-RELATED"/>
    <property type="match status" value="1"/>
</dbReference>
<dbReference type="Pfam" id="PF00763">
    <property type="entry name" value="THF_DHG_CYH"/>
    <property type="match status" value="1"/>
</dbReference>
<dbReference type="Pfam" id="PF02882">
    <property type="entry name" value="THF_DHG_CYH_C"/>
    <property type="match status" value="1"/>
</dbReference>
<dbReference type="PRINTS" id="PR00085">
    <property type="entry name" value="THFDHDRGNASE"/>
</dbReference>
<dbReference type="SUPFAM" id="SSF53223">
    <property type="entry name" value="Aminoacid dehydrogenase-like, N-terminal domain"/>
    <property type="match status" value="1"/>
</dbReference>
<dbReference type="SUPFAM" id="SSF51735">
    <property type="entry name" value="NAD(P)-binding Rossmann-fold domains"/>
    <property type="match status" value="1"/>
</dbReference>
<dbReference type="PROSITE" id="PS00766">
    <property type="entry name" value="THF_DHG_CYH_1"/>
    <property type="match status" value="1"/>
</dbReference>
<organism>
    <name type="scientific">Tropheryma whipplei (strain Twist)</name>
    <name type="common">Whipple's bacillus</name>
    <dbReference type="NCBI Taxonomy" id="203267"/>
    <lineage>
        <taxon>Bacteria</taxon>
        <taxon>Bacillati</taxon>
        <taxon>Actinomycetota</taxon>
        <taxon>Actinomycetes</taxon>
        <taxon>Micrococcales</taxon>
        <taxon>Tropherymataceae</taxon>
        <taxon>Tropheryma</taxon>
    </lineage>
</organism>